<name>HS181_ARATH</name>
<reference key="1">
    <citation type="journal article" date="1989" name="Mol. Gen. Genet.">
        <title>Characterization of two genes encoding small heat-shock proteins in Arabidopsis thaliana.</title>
        <authorList>
            <person name="Takahashi T."/>
            <person name="Komeda Y."/>
        </authorList>
    </citation>
    <scope>NUCLEOTIDE SEQUENCE [GENOMIC DNA]</scope>
    <source>
        <strain>cv. Columbia</strain>
    </source>
</reference>
<reference key="2">
    <citation type="journal article" date="1997" name="DNA Res.">
        <title>Structural analysis of Arabidopsis thaliana chromosome 5. II. Sequence features of the regions of 1,044,062 bp covered by thirteen physically assigned P1 clones.</title>
        <authorList>
            <person name="Kotani H."/>
            <person name="Nakamura Y."/>
            <person name="Sato S."/>
            <person name="Kaneko T."/>
            <person name="Asamizu E."/>
            <person name="Miyajima N."/>
            <person name="Tabata S."/>
        </authorList>
    </citation>
    <scope>NUCLEOTIDE SEQUENCE [LARGE SCALE GENOMIC DNA]</scope>
    <source>
        <strain>cv. Columbia</strain>
    </source>
</reference>
<reference key="3">
    <citation type="journal article" date="2017" name="Plant J.">
        <title>Araport11: a complete reannotation of the Arabidopsis thaliana reference genome.</title>
        <authorList>
            <person name="Cheng C.Y."/>
            <person name="Krishnakumar V."/>
            <person name="Chan A.P."/>
            <person name="Thibaud-Nissen F."/>
            <person name="Schobel S."/>
            <person name="Town C.D."/>
        </authorList>
    </citation>
    <scope>GENOME REANNOTATION</scope>
    <source>
        <strain>cv. Columbia</strain>
    </source>
</reference>
<reference key="4">
    <citation type="journal article" date="2003" name="Science">
        <title>Empirical analysis of transcriptional activity in the Arabidopsis genome.</title>
        <authorList>
            <person name="Yamada K."/>
            <person name="Lim J."/>
            <person name="Dale J.M."/>
            <person name="Chen H."/>
            <person name="Shinn P."/>
            <person name="Palm C.J."/>
            <person name="Southwick A.M."/>
            <person name="Wu H.C."/>
            <person name="Kim C.J."/>
            <person name="Nguyen M."/>
            <person name="Pham P.K."/>
            <person name="Cheuk R.F."/>
            <person name="Karlin-Newmann G."/>
            <person name="Liu S.X."/>
            <person name="Lam B."/>
            <person name="Sakano H."/>
            <person name="Wu T."/>
            <person name="Yu G."/>
            <person name="Miranda M."/>
            <person name="Quach H.L."/>
            <person name="Tripp M."/>
            <person name="Chang C.H."/>
            <person name="Lee J.M."/>
            <person name="Toriumi M.J."/>
            <person name="Chan M.M."/>
            <person name="Tang C.C."/>
            <person name="Onodera C.S."/>
            <person name="Deng J.M."/>
            <person name="Akiyama K."/>
            <person name="Ansari Y."/>
            <person name="Arakawa T."/>
            <person name="Banh J."/>
            <person name="Banno F."/>
            <person name="Bowser L."/>
            <person name="Brooks S.Y."/>
            <person name="Carninci P."/>
            <person name="Chao Q."/>
            <person name="Choy N."/>
            <person name="Enju A."/>
            <person name="Goldsmith A.D."/>
            <person name="Gurjal M."/>
            <person name="Hansen N.F."/>
            <person name="Hayashizaki Y."/>
            <person name="Johnson-Hopson C."/>
            <person name="Hsuan V.W."/>
            <person name="Iida K."/>
            <person name="Karnes M."/>
            <person name="Khan S."/>
            <person name="Koesema E."/>
            <person name="Ishida J."/>
            <person name="Jiang P.X."/>
            <person name="Jones T."/>
            <person name="Kawai J."/>
            <person name="Kamiya A."/>
            <person name="Meyers C."/>
            <person name="Nakajima M."/>
            <person name="Narusaka M."/>
            <person name="Seki M."/>
            <person name="Sakurai T."/>
            <person name="Satou M."/>
            <person name="Tamse R."/>
            <person name="Vaysberg M."/>
            <person name="Wallender E.K."/>
            <person name="Wong C."/>
            <person name="Yamamura Y."/>
            <person name="Yuan S."/>
            <person name="Shinozaki K."/>
            <person name="Davis R.W."/>
            <person name="Theologis A."/>
            <person name="Ecker J.R."/>
        </authorList>
    </citation>
    <scope>NUCLEOTIDE SEQUENCE [LARGE SCALE MRNA]</scope>
    <source>
        <strain>cv. Columbia</strain>
    </source>
</reference>
<reference key="5">
    <citation type="submission" date="2006-07" db="EMBL/GenBank/DDBJ databases">
        <title>Large-scale analysis of RIKEN Arabidopsis full-length (RAFL) cDNAs.</title>
        <authorList>
            <person name="Totoki Y."/>
            <person name="Seki M."/>
            <person name="Ishida J."/>
            <person name="Nakajima M."/>
            <person name="Enju A."/>
            <person name="Kamiya A."/>
            <person name="Narusaka M."/>
            <person name="Shin-i T."/>
            <person name="Nakagawa M."/>
            <person name="Sakamoto N."/>
            <person name="Oishi K."/>
            <person name="Kohara Y."/>
            <person name="Kobayashi M."/>
            <person name="Toyoda A."/>
            <person name="Sakaki Y."/>
            <person name="Sakurai T."/>
            <person name="Iida K."/>
            <person name="Akiyama K."/>
            <person name="Satou M."/>
            <person name="Toyoda T."/>
            <person name="Konagaya A."/>
            <person name="Carninci P."/>
            <person name="Kawai J."/>
            <person name="Hayashizaki Y."/>
            <person name="Shinozaki K."/>
        </authorList>
    </citation>
    <scope>NUCLEOTIDE SEQUENCE [LARGE SCALE MRNA]</scope>
    <source>
        <strain>cv. Columbia</strain>
    </source>
</reference>
<reference key="6">
    <citation type="submission" date="2002-03" db="EMBL/GenBank/DDBJ databases">
        <title>Full-length cDNA from Arabidopsis thaliana.</title>
        <authorList>
            <person name="Brover V.V."/>
            <person name="Troukhan M.E."/>
            <person name="Alexandrov N.A."/>
            <person name="Lu Y.-P."/>
            <person name="Flavell R.B."/>
            <person name="Feldmann K.A."/>
        </authorList>
    </citation>
    <scope>NUCLEOTIDE SEQUENCE [LARGE SCALE MRNA]</scope>
</reference>
<reference key="7">
    <citation type="journal article" date="2011" name="Plant Physiol.">
        <title>Small heat shock protein Hsp17.8 functions as an AKR2A cofactor in the targeting of chloroplast outer membrane proteins in Arabidopsis.</title>
        <authorList>
            <person name="Kim D.H."/>
            <person name="Xu Z.-Y."/>
            <person name="Na Y.J."/>
            <person name="Yoo Y.-J."/>
            <person name="Lee J."/>
            <person name="Sohn E.-J."/>
            <person name="Hwang I."/>
        </authorList>
    </citation>
    <scope>INTERACTION WITH AKR2A</scope>
    <scope>INDUCTION BY HEAT SHOCK</scope>
    <source>
        <strain>cv. Columbia</strain>
    </source>
</reference>
<organism>
    <name type="scientific">Arabidopsis thaliana</name>
    <name type="common">Mouse-ear cress</name>
    <dbReference type="NCBI Taxonomy" id="3702"/>
    <lineage>
        <taxon>Eukaryota</taxon>
        <taxon>Viridiplantae</taxon>
        <taxon>Streptophyta</taxon>
        <taxon>Embryophyta</taxon>
        <taxon>Tracheophyta</taxon>
        <taxon>Spermatophyta</taxon>
        <taxon>Magnoliopsida</taxon>
        <taxon>eudicotyledons</taxon>
        <taxon>Gunneridae</taxon>
        <taxon>Pentapetalae</taxon>
        <taxon>rosids</taxon>
        <taxon>malvids</taxon>
        <taxon>Brassicales</taxon>
        <taxon>Brassicaceae</taxon>
        <taxon>Camelineae</taxon>
        <taxon>Arabidopsis</taxon>
    </lineage>
</organism>
<accession>P19037</accession>
<accession>Q0WQZ8</accession>
<accession>Q8L8S1</accession>
<comment type="subunit">
    <text evidence="2 3">May form oligomeric structures. Binds to AKR2A (PubMed:21730198).</text>
</comment>
<comment type="subcellular location">
    <subcellularLocation>
        <location evidence="3">Cytoplasm</location>
    </subcellularLocation>
</comment>
<comment type="induction">
    <text evidence="2">Accumulates after heat shock.</text>
</comment>
<comment type="similarity">
    <text evidence="1">Belongs to the small heat shock protein (HSP20) family.</text>
</comment>
<dbReference type="EMBL" id="X17295">
    <property type="protein sequence ID" value="CAA35183.1"/>
    <property type="molecule type" value="Genomic_DNA"/>
</dbReference>
<dbReference type="EMBL" id="AB006705">
    <property type="protein sequence ID" value="BAB09509.1"/>
    <property type="molecule type" value="Genomic_DNA"/>
</dbReference>
<dbReference type="EMBL" id="CP002688">
    <property type="protein sequence ID" value="AED97223.1"/>
    <property type="molecule type" value="Genomic_DNA"/>
</dbReference>
<dbReference type="EMBL" id="AY070385">
    <property type="protein sequence ID" value="AAL49881.1"/>
    <property type="molecule type" value="mRNA"/>
</dbReference>
<dbReference type="EMBL" id="AY122948">
    <property type="protein sequence ID" value="AAM67481.1"/>
    <property type="molecule type" value="mRNA"/>
</dbReference>
<dbReference type="EMBL" id="AK228529">
    <property type="protein sequence ID" value="BAF00451.1"/>
    <property type="molecule type" value="mRNA"/>
</dbReference>
<dbReference type="EMBL" id="AY088849">
    <property type="protein sequence ID" value="AAM67156.1"/>
    <property type="molecule type" value="mRNA"/>
</dbReference>
<dbReference type="PIR" id="JQ0352">
    <property type="entry name" value="JQ0352"/>
</dbReference>
<dbReference type="RefSeq" id="NP_200780.1">
    <property type="nucleotide sequence ID" value="NM_125364.3"/>
</dbReference>
<dbReference type="SMR" id="P19037"/>
<dbReference type="BioGRID" id="21337">
    <property type="interactions" value="5"/>
</dbReference>
<dbReference type="FunCoup" id="P19037">
    <property type="interactions" value="192"/>
</dbReference>
<dbReference type="IntAct" id="P19037">
    <property type="interactions" value="3"/>
</dbReference>
<dbReference type="STRING" id="3702.P19037"/>
<dbReference type="PaxDb" id="3702-AT5G59720.1"/>
<dbReference type="ProteomicsDB" id="232104"/>
<dbReference type="EnsemblPlants" id="AT5G59720.1">
    <property type="protein sequence ID" value="AT5G59720.1"/>
    <property type="gene ID" value="AT5G59720"/>
</dbReference>
<dbReference type="GeneID" id="836093"/>
<dbReference type="Gramene" id="AT5G59720.1">
    <property type="protein sequence ID" value="AT5G59720.1"/>
    <property type="gene ID" value="AT5G59720"/>
</dbReference>
<dbReference type="KEGG" id="ath:AT5G59720"/>
<dbReference type="Araport" id="AT5G59720"/>
<dbReference type="TAIR" id="AT5G59720">
    <property type="gene designation" value="HSP18.2"/>
</dbReference>
<dbReference type="eggNOG" id="KOG0710">
    <property type="taxonomic scope" value="Eukaryota"/>
</dbReference>
<dbReference type="HOGENOM" id="CLU_046737_5_0_1"/>
<dbReference type="InParanoid" id="P19037"/>
<dbReference type="OMA" id="KYCIREF"/>
<dbReference type="PhylomeDB" id="P19037"/>
<dbReference type="PRO" id="PR:P19037"/>
<dbReference type="Proteomes" id="UP000006548">
    <property type="component" value="Chromosome 5"/>
</dbReference>
<dbReference type="ExpressionAtlas" id="P19037">
    <property type="expression patterns" value="baseline and differential"/>
</dbReference>
<dbReference type="GO" id="GO:0005737">
    <property type="term" value="C:cytoplasm"/>
    <property type="evidence" value="ECO:0007669"/>
    <property type="project" value="UniProtKB-SubCell"/>
</dbReference>
<dbReference type="GO" id="GO:0010286">
    <property type="term" value="P:heat acclimation"/>
    <property type="evidence" value="ECO:0000270"/>
    <property type="project" value="TAIR"/>
</dbReference>
<dbReference type="CDD" id="cd06472">
    <property type="entry name" value="ACD_ScHsp26_like"/>
    <property type="match status" value="1"/>
</dbReference>
<dbReference type="FunFam" id="2.60.40.790:FF:000009">
    <property type="entry name" value="17.6 kDa class I heat shock protein-like"/>
    <property type="match status" value="1"/>
</dbReference>
<dbReference type="Gene3D" id="2.60.40.790">
    <property type="match status" value="1"/>
</dbReference>
<dbReference type="InterPro" id="IPR002068">
    <property type="entry name" value="A-crystallin/Hsp20_dom"/>
</dbReference>
<dbReference type="InterPro" id="IPR008978">
    <property type="entry name" value="HSP20-like_chaperone"/>
</dbReference>
<dbReference type="InterPro" id="IPR031107">
    <property type="entry name" value="Small_HSP"/>
</dbReference>
<dbReference type="PANTHER" id="PTHR11527">
    <property type="entry name" value="HEAT-SHOCK PROTEIN 20 FAMILY MEMBER"/>
    <property type="match status" value="1"/>
</dbReference>
<dbReference type="Pfam" id="PF00011">
    <property type="entry name" value="HSP20"/>
    <property type="match status" value="1"/>
</dbReference>
<dbReference type="SUPFAM" id="SSF49764">
    <property type="entry name" value="HSP20-like chaperones"/>
    <property type="match status" value="1"/>
</dbReference>
<dbReference type="PROSITE" id="PS01031">
    <property type="entry name" value="SHSP"/>
    <property type="match status" value="1"/>
</dbReference>
<feature type="chain" id="PRO_0000125972" description="18.1 kDa class I heat shock protein">
    <location>
        <begin position="1"/>
        <end position="161"/>
    </location>
</feature>
<feature type="domain" description="sHSP" evidence="1">
    <location>
        <begin position="45"/>
        <end position="160"/>
    </location>
</feature>
<feature type="sequence conflict" description="In Ref. 6; AAM67156." evidence="3" ref="6">
    <original>L</original>
    <variation>V</variation>
    <location>
        <position position="23"/>
    </location>
</feature>
<gene>
    <name type="primary">HSP18.1</name>
    <name type="ordered locus">At5g59720</name>
    <name type="ORF">MTH12.7</name>
</gene>
<sequence>MSLIPSIFGGRRSNVFDPFSQDLWDPFEGFFTPSSALANASTARDVAAFTNARVDWKETPEAHVFKADLPGLKKEEVKVEVEDKNVLQISGERSKENEEKNDKWHRVERASGKFMRRFRLPENAKMEEVKATMENGVLTVVVPKAPEKKPQVKSIDISGAN</sequence>
<evidence type="ECO:0000255" key="1">
    <source>
        <dbReference type="PROSITE-ProRule" id="PRU00285"/>
    </source>
</evidence>
<evidence type="ECO:0000269" key="2">
    <source>
    </source>
</evidence>
<evidence type="ECO:0000305" key="3"/>
<keyword id="KW-0963">Cytoplasm</keyword>
<keyword id="KW-1185">Reference proteome</keyword>
<keyword id="KW-0346">Stress response</keyword>
<protein>
    <recommendedName>
        <fullName>18.1 kDa class I heat shock protein</fullName>
    </recommendedName>
    <alternativeName>
        <fullName>18.1 kDa heat shock protein</fullName>
        <shortName>AtHsp18.1</shortName>
    </alternativeName>
</protein>
<proteinExistence type="evidence at protein level"/>